<feature type="signal peptide" evidence="2">
    <location>
        <begin position="1"/>
        <end position="22"/>
    </location>
</feature>
<feature type="chain" id="PRO_0000403904" description="Venom protein 59.1">
    <location>
        <begin position="23"/>
        <end position="94"/>
    </location>
</feature>
<feature type="domain" description="IGFBP N-terminal" evidence="3">
    <location>
        <begin position="23"/>
        <end position="94"/>
    </location>
</feature>
<feature type="disulfide bond" evidence="3">
    <location>
        <begin position="19"/>
        <end position="47"/>
    </location>
</feature>
<feature type="disulfide bond" evidence="3">
    <location>
        <begin position="26"/>
        <end position="49"/>
    </location>
</feature>
<feature type="disulfide bond" evidence="3">
    <location>
        <begin position="32"/>
        <end position="50"/>
    </location>
</feature>
<feature type="disulfide bond" evidence="3">
    <location>
        <begin position="38"/>
        <end position="53"/>
    </location>
</feature>
<feature type="disulfide bond" evidence="3">
    <location>
        <begin position="61"/>
        <end position="76"/>
    </location>
</feature>
<feature type="disulfide bond" evidence="3">
    <location>
        <begin position="70"/>
        <end position="91"/>
    </location>
</feature>
<reference key="1">
    <citation type="journal article" date="2010" name="BMC Genomics">
        <title>Comparative venom gland transcriptome analysis of the scorpion Lychas mucronatus reveals intraspecific toxic gene diversity and new venomous components.</title>
        <authorList>
            <person name="Zhao R."/>
            <person name="Ma Y."/>
            <person name="He Y."/>
            <person name="Di Z."/>
            <person name="Wu Y.-L."/>
            <person name="Cao Z.-J."/>
            <person name="Li W.-X."/>
        </authorList>
    </citation>
    <scope>NUCLEOTIDE SEQUENCE [MRNA]</scope>
    <source>
        <strain>Yunnan</strain>
        <tissue>Venom gland</tissue>
    </source>
</reference>
<protein>
    <recommendedName>
        <fullName>Venom protein 59.1</fullName>
    </recommendedName>
</protein>
<evidence type="ECO:0000250" key="1"/>
<evidence type="ECO:0000255" key="2"/>
<evidence type="ECO:0000255" key="3">
    <source>
        <dbReference type="PROSITE-ProRule" id="PRU00653"/>
    </source>
</evidence>
<keyword id="KW-1015">Disulfide bond</keyword>
<keyword id="KW-0964">Secreted</keyword>
<keyword id="KW-0732">Signal</keyword>
<proteinExistence type="evidence at transcript level"/>
<accession>P0CJ12</accession>
<sequence length="94" mass="10205">MNSREMFCVFILFASFFYCSYAEQECNCDKSCEPVKDCTFGTAMDKCGCCEVCAVGIGHFCGKFFNNAVCAEGLKCAKLGEGADGEALEICLRA</sequence>
<comment type="subcellular location">
    <subcellularLocation>
        <location evidence="1">Secreted</location>
    </subcellularLocation>
</comment>
<comment type="tissue specificity">
    <text>Expressed by the venom gland.</text>
</comment>
<organism>
    <name type="scientific">Lychas mucronatus</name>
    <name type="common">Chinese swimming scorpion</name>
    <dbReference type="NCBI Taxonomy" id="172552"/>
    <lineage>
        <taxon>Eukaryota</taxon>
        <taxon>Metazoa</taxon>
        <taxon>Ecdysozoa</taxon>
        <taxon>Arthropoda</taxon>
        <taxon>Chelicerata</taxon>
        <taxon>Arachnida</taxon>
        <taxon>Scorpiones</taxon>
        <taxon>Buthida</taxon>
        <taxon>Buthoidea</taxon>
        <taxon>Buthidae</taxon>
        <taxon>Lychas</taxon>
    </lineage>
</organism>
<name>VP59_LYCMC</name>
<dbReference type="EMBL" id="GT028923">
    <property type="status" value="NOT_ANNOTATED_CDS"/>
    <property type="molecule type" value="mRNA"/>
</dbReference>
<dbReference type="SMR" id="P0CJ12"/>
<dbReference type="GO" id="GO:0005576">
    <property type="term" value="C:extracellular region"/>
    <property type="evidence" value="ECO:0007669"/>
    <property type="project" value="UniProtKB-SubCell"/>
</dbReference>
<dbReference type="Gene3D" id="4.10.40.20">
    <property type="match status" value="1"/>
</dbReference>
<dbReference type="InterPro" id="IPR009030">
    <property type="entry name" value="Growth_fac_rcpt_cys_sf"/>
</dbReference>
<dbReference type="InterPro" id="IPR000867">
    <property type="entry name" value="IGFBP-like"/>
</dbReference>
<dbReference type="Pfam" id="PF00219">
    <property type="entry name" value="IGFBP"/>
    <property type="match status" value="1"/>
</dbReference>
<dbReference type="SUPFAM" id="SSF57184">
    <property type="entry name" value="Growth factor receptor domain"/>
    <property type="match status" value="1"/>
</dbReference>
<dbReference type="PROSITE" id="PS51323">
    <property type="entry name" value="IGFBP_N_2"/>
    <property type="match status" value="1"/>
</dbReference>